<keyword id="KW-0067">ATP-binding</keyword>
<keyword id="KW-0238">DNA-binding</keyword>
<keyword id="KW-0479">Metal-binding</keyword>
<keyword id="KW-0547">Nucleotide-binding</keyword>
<keyword id="KW-0678">Repressor</keyword>
<keyword id="KW-0804">Transcription</keyword>
<keyword id="KW-0805">Transcription regulation</keyword>
<keyword id="KW-0862">Zinc</keyword>
<keyword id="KW-0863">Zinc-finger</keyword>
<sequence length="154" mass="17937">MRCPTCQYNGTRVVDSRPADDGNSIRRRRECEKCGFRFTTFEKVEESPLIVVKKDGAREEFAREKVRRGLIRACEKRPVSAEQIEEIVNEVERELRNIGDSEIASDLIGEKVMNKLANLDEVAYVRFASVYRQFKDISVFVEELKDLMEKNKDR</sequence>
<evidence type="ECO:0000255" key="1">
    <source>
        <dbReference type="HAMAP-Rule" id="MF_00440"/>
    </source>
</evidence>
<protein>
    <recommendedName>
        <fullName evidence="1">Transcriptional repressor NrdR</fullName>
    </recommendedName>
</protein>
<organism>
    <name type="scientific">Listeria monocytogenes serotype 4b (strain CLIP80459)</name>
    <dbReference type="NCBI Taxonomy" id="568819"/>
    <lineage>
        <taxon>Bacteria</taxon>
        <taxon>Bacillati</taxon>
        <taxon>Bacillota</taxon>
        <taxon>Bacilli</taxon>
        <taxon>Bacillales</taxon>
        <taxon>Listeriaceae</taxon>
        <taxon>Listeria</taxon>
    </lineage>
</organism>
<reference key="1">
    <citation type="journal article" date="2012" name="BMC Genomics">
        <title>Comparative genomics and transcriptomics of lineages I, II, and III strains of Listeria monocytogenes.</title>
        <authorList>
            <person name="Hain T."/>
            <person name="Ghai R."/>
            <person name="Billion A."/>
            <person name="Kuenne C.T."/>
            <person name="Steinweg C."/>
            <person name="Izar B."/>
            <person name="Mohamed W."/>
            <person name="Mraheil M."/>
            <person name="Domann E."/>
            <person name="Schaffrath S."/>
            <person name="Karst U."/>
            <person name="Goesmann A."/>
            <person name="Oehm S."/>
            <person name="Puhler A."/>
            <person name="Merkl R."/>
            <person name="Vorwerk S."/>
            <person name="Glaser P."/>
            <person name="Garrido P."/>
            <person name="Rusniok C."/>
            <person name="Buchrieser C."/>
            <person name="Goebel W."/>
            <person name="Chakraborty T."/>
        </authorList>
    </citation>
    <scope>NUCLEOTIDE SEQUENCE [LARGE SCALE GENOMIC DNA]</scope>
    <source>
        <strain>CLIP80459</strain>
    </source>
</reference>
<name>NRDR_LISMC</name>
<accession>C1KVK9</accession>
<dbReference type="EMBL" id="FM242711">
    <property type="protein sequence ID" value="CAS05334.1"/>
    <property type="molecule type" value="Genomic_DNA"/>
</dbReference>
<dbReference type="RefSeq" id="WP_003723246.1">
    <property type="nucleotide sequence ID" value="NC_012488.1"/>
</dbReference>
<dbReference type="SMR" id="C1KVK9"/>
<dbReference type="KEGG" id="lmc:Lm4b_01573"/>
<dbReference type="HOGENOM" id="CLU_108412_0_0_9"/>
<dbReference type="GO" id="GO:0005524">
    <property type="term" value="F:ATP binding"/>
    <property type="evidence" value="ECO:0007669"/>
    <property type="project" value="UniProtKB-KW"/>
</dbReference>
<dbReference type="GO" id="GO:0003677">
    <property type="term" value="F:DNA binding"/>
    <property type="evidence" value="ECO:0007669"/>
    <property type="project" value="UniProtKB-KW"/>
</dbReference>
<dbReference type="GO" id="GO:0008270">
    <property type="term" value="F:zinc ion binding"/>
    <property type="evidence" value="ECO:0007669"/>
    <property type="project" value="UniProtKB-UniRule"/>
</dbReference>
<dbReference type="GO" id="GO:0045892">
    <property type="term" value="P:negative regulation of DNA-templated transcription"/>
    <property type="evidence" value="ECO:0007669"/>
    <property type="project" value="UniProtKB-UniRule"/>
</dbReference>
<dbReference type="HAMAP" id="MF_00440">
    <property type="entry name" value="NrdR"/>
    <property type="match status" value="1"/>
</dbReference>
<dbReference type="InterPro" id="IPR005144">
    <property type="entry name" value="ATP-cone_dom"/>
</dbReference>
<dbReference type="InterPro" id="IPR055173">
    <property type="entry name" value="NrdR-like_N"/>
</dbReference>
<dbReference type="InterPro" id="IPR003796">
    <property type="entry name" value="RNR_NrdR-like"/>
</dbReference>
<dbReference type="NCBIfam" id="TIGR00244">
    <property type="entry name" value="transcriptional regulator NrdR"/>
    <property type="match status" value="1"/>
</dbReference>
<dbReference type="PANTHER" id="PTHR30455">
    <property type="entry name" value="TRANSCRIPTIONAL REPRESSOR NRDR"/>
    <property type="match status" value="1"/>
</dbReference>
<dbReference type="PANTHER" id="PTHR30455:SF2">
    <property type="entry name" value="TRANSCRIPTIONAL REPRESSOR NRDR"/>
    <property type="match status" value="1"/>
</dbReference>
<dbReference type="Pfam" id="PF03477">
    <property type="entry name" value="ATP-cone"/>
    <property type="match status" value="1"/>
</dbReference>
<dbReference type="Pfam" id="PF22811">
    <property type="entry name" value="Zn_ribbon_NrdR"/>
    <property type="match status" value="1"/>
</dbReference>
<dbReference type="PROSITE" id="PS51161">
    <property type="entry name" value="ATP_CONE"/>
    <property type="match status" value="1"/>
</dbReference>
<comment type="function">
    <text evidence="1">Negatively regulates transcription of bacterial ribonucleotide reductase nrd genes and operons by binding to NrdR-boxes.</text>
</comment>
<comment type="cofactor">
    <cofactor evidence="1">
        <name>Zn(2+)</name>
        <dbReference type="ChEBI" id="CHEBI:29105"/>
    </cofactor>
    <text evidence="1">Binds 1 zinc ion.</text>
</comment>
<comment type="similarity">
    <text evidence="1">Belongs to the NrdR family.</text>
</comment>
<proteinExistence type="inferred from homology"/>
<feature type="chain" id="PRO_1000206122" description="Transcriptional repressor NrdR">
    <location>
        <begin position="1"/>
        <end position="154"/>
    </location>
</feature>
<feature type="domain" description="ATP-cone" evidence="1">
    <location>
        <begin position="49"/>
        <end position="139"/>
    </location>
</feature>
<feature type="zinc finger region" evidence="1">
    <location>
        <begin position="3"/>
        <end position="34"/>
    </location>
</feature>
<gene>
    <name evidence="1" type="primary">nrdR</name>
    <name type="ordered locus">Lm4b_01573</name>
</gene>